<keyword id="KW-0274">FAD</keyword>
<keyword id="KW-0285">Flavoprotein</keyword>
<keyword id="KW-0503">Monooxygenase</keyword>
<keyword id="KW-0521">NADP</keyword>
<keyword id="KW-0560">Oxidoreductase</keyword>
<keyword id="KW-1185">Reference proteome</keyword>
<evidence type="ECO:0000250" key="1"/>
<evidence type="ECO:0000255" key="2"/>
<evidence type="ECO:0000305" key="3"/>
<name>GSXLX_ARATH</name>
<reference key="1">
    <citation type="journal article" date="2000" name="Nature">
        <title>Sequence and analysis of chromosome 1 of the plant Arabidopsis thaliana.</title>
        <authorList>
            <person name="Theologis A."/>
            <person name="Ecker J.R."/>
            <person name="Palm C.J."/>
            <person name="Federspiel N.A."/>
            <person name="Kaul S."/>
            <person name="White O."/>
            <person name="Alonso J."/>
            <person name="Altafi H."/>
            <person name="Araujo R."/>
            <person name="Bowman C.L."/>
            <person name="Brooks S.Y."/>
            <person name="Buehler E."/>
            <person name="Chan A."/>
            <person name="Chao Q."/>
            <person name="Chen H."/>
            <person name="Cheuk R.F."/>
            <person name="Chin C.W."/>
            <person name="Chung M.K."/>
            <person name="Conn L."/>
            <person name="Conway A.B."/>
            <person name="Conway A.R."/>
            <person name="Creasy T.H."/>
            <person name="Dewar K."/>
            <person name="Dunn P."/>
            <person name="Etgu P."/>
            <person name="Feldblyum T.V."/>
            <person name="Feng J.-D."/>
            <person name="Fong B."/>
            <person name="Fujii C.Y."/>
            <person name="Gill J.E."/>
            <person name="Goldsmith A.D."/>
            <person name="Haas B."/>
            <person name="Hansen N.F."/>
            <person name="Hughes B."/>
            <person name="Huizar L."/>
            <person name="Hunter J.L."/>
            <person name="Jenkins J."/>
            <person name="Johnson-Hopson C."/>
            <person name="Khan S."/>
            <person name="Khaykin E."/>
            <person name="Kim C.J."/>
            <person name="Koo H.L."/>
            <person name="Kremenetskaia I."/>
            <person name="Kurtz D.B."/>
            <person name="Kwan A."/>
            <person name="Lam B."/>
            <person name="Langin-Hooper S."/>
            <person name="Lee A."/>
            <person name="Lee J.M."/>
            <person name="Lenz C.A."/>
            <person name="Li J.H."/>
            <person name="Li Y.-P."/>
            <person name="Lin X."/>
            <person name="Liu S.X."/>
            <person name="Liu Z.A."/>
            <person name="Luros J.S."/>
            <person name="Maiti R."/>
            <person name="Marziali A."/>
            <person name="Militscher J."/>
            <person name="Miranda M."/>
            <person name="Nguyen M."/>
            <person name="Nierman W.C."/>
            <person name="Osborne B.I."/>
            <person name="Pai G."/>
            <person name="Peterson J."/>
            <person name="Pham P.K."/>
            <person name="Rizzo M."/>
            <person name="Rooney T."/>
            <person name="Rowley D."/>
            <person name="Sakano H."/>
            <person name="Salzberg S.L."/>
            <person name="Schwartz J.R."/>
            <person name="Shinn P."/>
            <person name="Southwick A.M."/>
            <person name="Sun H."/>
            <person name="Tallon L.J."/>
            <person name="Tambunga G."/>
            <person name="Toriumi M.J."/>
            <person name="Town C.D."/>
            <person name="Utterback T."/>
            <person name="Van Aken S."/>
            <person name="Vaysberg M."/>
            <person name="Vysotskaia V.S."/>
            <person name="Walker M."/>
            <person name="Wu D."/>
            <person name="Yu G."/>
            <person name="Fraser C.M."/>
            <person name="Venter J.C."/>
            <person name="Davis R.W."/>
        </authorList>
    </citation>
    <scope>NUCLEOTIDE SEQUENCE [LARGE SCALE GENOMIC DNA]</scope>
    <source>
        <strain>cv. Columbia</strain>
    </source>
</reference>
<reference key="2">
    <citation type="journal article" date="2017" name="Plant J.">
        <title>Araport11: a complete reannotation of the Arabidopsis thaliana reference genome.</title>
        <authorList>
            <person name="Cheng C.Y."/>
            <person name="Krishnakumar V."/>
            <person name="Chan A.P."/>
            <person name="Thibaud-Nissen F."/>
            <person name="Schobel S."/>
            <person name="Town C.D."/>
        </authorList>
    </citation>
    <scope>GENOME REANNOTATION</scope>
    <source>
        <strain>cv. Columbia</strain>
    </source>
</reference>
<reference key="3">
    <citation type="journal article" date="2007" name="Plant J.">
        <title>Identification of a flavin-monooxygenase as the S-oxygenating enzyme in aliphatic glucosinolate biosynthesis in Arabidopsis.</title>
        <authorList>
            <person name="Hansen B.G."/>
            <person name="Kliebenstein D.J."/>
            <person name="Halkier B.A."/>
        </authorList>
    </citation>
    <scope>GENE FAMILY</scope>
    <source>
        <strain>cv. Columbia</strain>
    </source>
</reference>
<comment type="function">
    <text evidence="1">Catalyzes the conversion of methylthioalkyl glucosinolates of any chain length into methylsulfinylalkyl glucosinolates.</text>
</comment>
<comment type="cofactor">
    <cofactor evidence="1">
        <name>FAD</name>
        <dbReference type="ChEBI" id="CHEBI:57692"/>
    </cofactor>
</comment>
<comment type="similarity">
    <text evidence="3">Belongs to the FMO family.</text>
</comment>
<comment type="caution">
    <text evidence="3">Could be the product of a pseudogene.</text>
</comment>
<comment type="sequence caution" evidence="3">
    <conflict type="erroneous gene model prediction">
        <sequence resource="EMBL-CDS" id="AAG52152"/>
    </conflict>
</comment>
<comment type="sequence caution" evidence="3">
    <conflict type="frameshift">
        <sequence resource="EMBL-CDS" id="AAG52152"/>
    </conflict>
</comment>
<comment type="sequence caution" evidence="3">
    <conflict type="erroneous gene model prediction">
        <sequence resource="EMBL-CDS" id="AEE34088"/>
    </conflict>
</comment>
<organism>
    <name type="scientific">Arabidopsis thaliana</name>
    <name type="common">Mouse-ear cress</name>
    <dbReference type="NCBI Taxonomy" id="3702"/>
    <lineage>
        <taxon>Eukaryota</taxon>
        <taxon>Viridiplantae</taxon>
        <taxon>Streptophyta</taxon>
        <taxon>Embryophyta</taxon>
        <taxon>Tracheophyta</taxon>
        <taxon>Spermatophyta</taxon>
        <taxon>Magnoliopsida</taxon>
        <taxon>eudicotyledons</taxon>
        <taxon>Gunneridae</taxon>
        <taxon>Pentapetalae</taxon>
        <taxon>rosids</taxon>
        <taxon>malvids</taxon>
        <taxon>Brassicales</taxon>
        <taxon>Brassicaceae</taxon>
        <taxon>Camelineae</taxon>
        <taxon>Arabidopsis</taxon>
    </lineage>
</organism>
<feature type="chain" id="PRO_0000401965" description="Putative flavin-containing monooxygenase FMO GS-OX-like 10">
    <location>
        <begin position="1"/>
        <end position="448"/>
    </location>
</feature>
<feature type="binding site" evidence="2">
    <location>
        <begin position="18"/>
        <end position="23"/>
    </location>
    <ligand>
        <name>FAD</name>
        <dbReference type="ChEBI" id="CHEBI:57692"/>
    </ligand>
</feature>
<feature type="binding site" evidence="2">
    <location>
        <begin position="212"/>
        <end position="217"/>
    </location>
    <ligand>
        <name>NADP(+)</name>
        <dbReference type="ChEBI" id="CHEBI:58349"/>
    </ligand>
</feature>
<accession>Q9C8T8</accession>
<accession>F4I223</accession>
<protein>
    <recommendedName>
        <fullName>Putative flavin-containing monooxygenase FMO GS-OX-like 10</fullName>
        <ecNumber>1.8.-.-</ecNumber>
    </recommendedName>
    <alternativeName>
        <fullName>Putative flavin-monooxygenase glucosinolate S-oxygenase-like 10</fullName>
    </alternativeName>
</protein>
<sequence length="448" mass="51118">MVPAVNPPTTSHHVAVIGAGAAGLVAARELRREGHSVVVFERGNQIGGVWAYTPNVEPDPLSIDPTRPVIHSSLYSSLRTIIPRECMGFTDFPFSTGPENKSRDPRRHPGHIEVLAYLKDFARKFKMDEMIRFETEVVRAEPAAENPKKWRVESRNSGDISDEIYDAVVVCNGHYTEPRHALIPGIDSCPGKQIHSHNYRIPDQFKDQLNSGSSVSGVDISRDIVNVTKEVHISSRSTKPETYEKLSGYDNLWLHSNIETVREDGSVVFKNGKTVYADTIMHCTGYKYYFPFLDTKGEVTVEDNRVGPLYKHVFPPALSPGLSFIGLPWQVILFPMFELQSKWVAAVLAGRFYSKLEASCIPKRYTHLMAELDSQFVYDNWLADQCDYPRIEKWREQMFYKVFKRIQSQSSTYKDDWDDDHLIAEAYEDFVKFPSNYPSSLIEREYTS</sequence>
<gene>
    <name type="ordered locus">At1g63340</name>
    <name type="ORF">F9N12.4</name>
</gene>
<proteinExistence type="uncertain"/>
<dbReference type="EC" id="1.8.-.-"/>
<dbReference type="EMBL" id="AC022355">
    <property type="protein sequence ID" value="AAG52152.1"/>
    <property type="status" value="ALT_SEQ"/>
    <property type="molecule type" value="Genomic_DNA"/>
</dbReference>
<dbReference type="EMBL" id="CP002684">
    <property type="protein sequence ID" value="AEE34088.1"/>
    <property type="status" value="ALT_SEQ"/>
    <property type="molecule type" value="Genomic_DNA"/>
</dbReference>
<dbReference type="PIR" id="D96659">
    <property type="entry name" value="D96659"/>
</dbReference>
<dbReference type="RefSeq" id="NP_176523.4">
    <property type="nucleotide sequence ID" value="NM_105013.4"/>
</dbReference>
<dbReference type="SMR" id="Q9C8T8"/>
<dbReference type="FunCoup" id="Q9C8T8">
    <property type="interactions" value="418"/>
</dbReference>
<dbReference type="STRING" id="3702.Q9C8T8"/>
<dbReference type="PaxDb" id="3702-AT1G63340.1"/>
<dbReference type="GeneID" id="842640"/>
<dbReference type="KEGG" id="ath:AT1G63340"/>
<dbReference type="Araport" id="AT1G63340"/>
<dbReference type="TAIR" id="AT1G63340"/>
<dbReference type="eggNOG" id="KOG1399">
    <property type="taxonomic scope" value="Eukaryota"/>
</dbReference>
<dbReference type="HOGENOM" id="CLU_006909_3_0_1"/>
<dbReference type="InParanoid" id="Q9C8T8"/>
<dbReference type="BioCyc" id="ARA:AT1G63340-MONOMER"/>
<dbReference type="Proteomes" id="UP000006548">
    <property type="component" value="Chromosome 1"/>
</dbReference>
<dbReference type="ExpressionAtlas" id="Q9C8T8">
    <property type="expression patterns" value="baseline and differential"/>
</dbReference>
<dbReference type="GO" id="GO:0050660">
    <property type="term" value="F:flavin adenine dinucleotide binding"/>
    <property type="evidence" value="ECO:0007669"/>
    <property type="project" value="InterPro"/>
</dbReference>
<dbReference type="GO" id="GO:0004499">
    <property type="term" value="F:N,N-dimethylaniline monooxygenase activity"/>
    <property type="evidence" value="ECO:0007669"/>
    <property type="project" value="InterPro"/>
</dbReference>
<dbReference type="GO" id="GO:0050661">
    <property type="term" value="F:NADP binding"/>
    <property type="evidence" value="ECO:0007669"/>
    <property type="project" value="InterPro"/>
</dbReference>
<dbReference type="FunFam" id="3.50.50.60:FF:000099">
    <property type="entry name" value="Flavin-containing monooxygenase"/>
    <property type="match status" value="1"/>
</dbReference>
<dbReference type="Gene3D" id="3.50.50.60">
    <property type="entry name" value="FAD/NAD(P)-binding domain"/>
    <property type="match status" value="2"/>
</dbReference>
<dbReference type="InterPro" id="IPR036188">
    <property type="entry name" value="FAD/NAD-bd_sf"/>
</dbReference>
<dbReference type="InterPro" id="IPR000960">
    <property type="entry name" value="Flavin_mOase"/>
</dbReference>
<dbReference type="InterPro" id="IPR020946">
    <property type="entry name" value="Flavin_mOase-like"/>
</dbReference>
<dbReference type="InterPro" id="IPR050346">
    <property type="entry name" value="FMO-like"/>
</dbReference>
<dbReference type="PANTHER" id="PTHR23023">
    <property type="entry name" value="DIMETHYLANILINE MONOOXYGENASE"/>
    <property type="match status" value="1"/>
</dbReference>
<dbReference type="Pfam" id="PF00743">
    <property type="entry name" value="FMO-like"/>
    <property type="match status" value="2"/>
</dbReference>
<dbReference type="PRINTS" id="PR00370">
    <property type="entry name" value="FMOXYGENASE"/>
</dbReference>
<dbReference type="SUPFAM" id="SSF51905">
    <property type="entry name" value="FAD/NAD(P)-binding domain"/>
    <property type="match status" value="2"/>
</dbReference>